<name>SERC_POLSJ</name>
<proteinExistence type="inferred from homology"/>
<organism>
    <name type="scientific">Polaromonas sp. (strain JS666 / ATCC BAA-500)</name>
    <dbReference type="NCBI Taxonomy" id="296591"/>
    <lineage>
        <taxon>Bacteria</taxon>
        <taxon>Pseudomonadati</taxon>
        <taxon>Pseudomonadota</taxon>
        <taxon>Betaproteobacteria</taxon>
        <taxon>Burkholderiales</taxon>
        <taxon>Comamonadaceae</taxon>
        <taxon>Polaromonas</taxon>
    </lineage>
</organism>
<gene>
    <name evidence="1" type="primary">serC</name>
    <name type="ordered locus">Bpro_1793</name>
</gene>
<dbReference type="EC" id="2.6.1.52" evidence="1"/>
<dbReference type="EMBL" id="CP000316">
    <property type="protein sequence ID" value="ABE43729.1"/>
    <property type="molecule type" value="Genomic_DNA"/>
</dbReference>
<dbReference type="RefSeq" id="WP_011482728.1">
    <property type="nucleotide sequence ID" value="NC_007948.1"/>
</dbReference>
<dbReference type="SMR" id="Q12CL3"/>
<dbReference type="STRING" id="296591.Bpro_1793"/>
<dbReference type="KEGG" id="pol:Bpro_1793"/>
<dbReference type="eggNOG" id="COG1932">
    <property type="taxonomic scope" value="Bacteria"/>
</dbReference>
<dbReference type="HOGENOM" id="CLU_034866_0_0_4"/>
<dbReference type="OrthoDB" id="9809412at2"/>
<dbReference type="UniPathway" id="UPA00135">
    <property type="reaction ID" value="UER00197"/>
</dbReference>
<dbReference type="UniPathway" id="UPA00244">
    <property type="reaction ID" value="UER00311"/>
</dbReference>
<dbReference type="Proteomes" id="UP000001983">
    <property type="component" value="Chromosome"/>
</dbReference>
<dbReference type="GO" id="GO:0005737">
    <property type="term" value="C:cytoplasm"/>
    <property type="evidence" value="ECO:0007669"/>
    <property type="project" value="UniProtKB-SubCell"/>
</dbReference>
<dbReference type="GO" id="GO:0004648">
    <property type="term" value="F:O-phospho-L-serine:2-oxoglutarate aminotransferase activity"/>
    <property type="evidence" value="ECO:0007669"/>
    <property type="project" value="UniProtKB-UniRule"/>
</dbReference>
<dbReference type="GO" id="GO:0030170">
    <property type="term" value="F:pyridoxal phosphate binding"/>
    <property type="evidence" value="ECO:0007669"/>
    <property type="project" value="UniProtKB-UniRule"/>
</dbReference>
<dbReference type="GO" id="GO:0006564">
    <property type="term" value="P:L-serine biosynthetic process"/>
    <property type="evidence" value="ECO:0007669"/>
    <property type="project" value="UniProtKB-UniRule"/>
</dbReference>
<dbReference type="GO" id="GO:0008615">
    <property type="term" value="P:pyridoxine biosynthetic process"/>
    <property type="evidence" value="ECO:0007669"/>
    <property type="project" value="UniProtKB-UniRule"/>
</dbReference>
<dbReference type="FunFam" id="3.40.640.10:FF:000010">
    <property type="entry name" value="Phosphoserine aminotransferase"/>
    <property type="match status" value="1"/>
</dbReference>
<dbReference type="FunFam" id="3.90.1150.10:FF:000006">
    <property type="entry name" value="Phosphoserine aminotransferase"/>
    <property type="match status" value="1"/>
</dbReference>
<dbReference type="Gene3D" id="3.90.1150.10">
    <property type="entry name" value="Aspartate Aminotransferase, domain 1"/>
    <property type="match status" value="1"/>
</dbReference>
<dbReference type="Gene3D" id="3.40.640.10">
    <property type="entry name" value="Type I PLP-dependent aspartate aminotransferase-like (Major domain)"/>
    <property type="match status" value="1"/>
</dbReference>
<dbReference type="HAMAP" id="MF_00160">
    <property type="entry name" value="SerC_aminotrans_5"/>
    <property type="match status" value="1"/>
</dbReference>
<dbReference type="InterPro" id="IPR000192">
    <property type="entry name" value="Aminotrans_V_dom"/>
</dbReference>
<dbReference type="InterPro" id="IPR020578">
    <property type="entry name" value="Aminotrans_V_PyrdxlP_BS"/>
</dbReference>
<dbReference type="InterPro" id="IPR022278">
    <property type="entry name" value="Pser_aminoTfrase"/>
</dbReference>
<dbReference type="InterPro" id="IPR015424">
    <property type="entry name" value="PyrdxlP-dep_Trfase"/>
</dbReference>
<dbReference type="InterPro" id="IPR015421">
    <property type="entry name" value="PyrdxlP-dep_Trfase_major"/>
</dbReference>
<dbReference type="InterPro" id="IPR015422">
    <property type="entry name" value="PyrdxlP-dep_Trfase_small"/>
</dbReference>
<dbReference type="NCBIfam" id="NF003764">
    <property type="entry name" value="PRK05355.1"/>
    <property type="match status" value="1"/>
</dbReference>
<dbReference type="NCBIfam" id="TIGR01364">
    <property type="entry name" value="serC_1"/>
    <property type="match status" value="1"/>
</dbReference>
<dbReference type="PANTHER" id="PTHR43247">
    <property type="entry name" value="PHOSPHOSERINE AMINOTRANSFERASE"/>
    <property type="match status" value="1"/>
</dbReference>
<dbReference type="PANTHER" id="PTHR43247:SF1">
    <property type="entry name" value="PHOSPHOSERINE AMINOTRANSFERASE"/>
    <property type="match status" value="1"/>
</dbReference>
<dbReference type="Pfam" id="PF00266">
    <property type="entry name" value="Aminotran_5"/>
    <property type="match status" value="1"/>
</dbReference>
<dbReference type="PIRSF" id="PIRSF000525">
    <property type="entry name" value="SerC"/>
    <property type="match status" value="1"/>
</dbReference>
<dbReference type="SUPFAM" id="SSF53383">
    <property type="entry name" value="PLP-dependent transferases"/>
    <property type="match status" value="1"/>
</dbReference>
<dbReference type="PROSITE" id="PS00595">
    <property type="entry name" value="AA_TRANSFER_CLASS_5"/>
    <property type="match status" value="1"/>
</dbReference>
<accession>Q12CL3</accession>
<protein>
    <recommendedName>
        <fullName evidence="1">Phosphoserine aminotransferase</fullName>
        <ecNumber evidence="1">2.6.1.52</ecNumber>
    </recommendedName>
    <alternativeName>
        <fullName evidence="1">Phosphohydroxythreonine aminotransferase</fullName>
        <shortName evidence="1">PSAT</shortName>
    </alternativeName>
</protein>
<sequence>MTRPFNFSAGPANLPEEVLQQAAAEMLDWHGSGMSVMEMSHRGKEFISIYENAEADFRELMAIPPNFKILFMQGGGLAENAIVPLNLSRGASADFVVTGSWSDKSQKEARKYCDVQIAATNAGSDHTQLPPPASWNLRRDASYVHVCTNETIHGVEFQELPDIKTLGSDAPLVIDFSSHVASRPVDWSRVGLAFGGAQKNLGPAGVTLVVVREDLMGHALPACPSAFDYKTVADNHSMYNTPPTYAIYIAGLTFQWLKRQKEGDVTGIAAMEKRNLAKAQLLYDAIDRSQLYFNRVGSECRSRMNVPFLLRDESRNEAFLAGAKAHSLLQLKGHKSVGGMRASIYNAMPLAGIEALIGYMREFEQKHA</sequence>
<keyword id="KW-0028">Amino-acid biosynthesis</keyword>
<keyword id="KW-0032">Aminotransferase</keyword>
<keyword id="KW-0963">Cytoplasm</keyword>
<keyword id="KW-0663">Pyridoxal phosphate</keyword>
<keyword id="KW-0664">Pyridoxine biosynthesis</keyword>
<keyword id="KW-1185">Reference proteome</keyword>
<keyword id="KW-0718">Serine biosynthesis</keyword>
<keyword id="KW-0808">Transferase</keyword>
<reference key="1">
    <citation type="journal article" date="2008" name="Appl. Environ. Microbiol.">
        <title>The genome of Polaromonas sp. strain JS666: insights into the evolution of a hydrocarbon- and xenobiotic-degrading bacterium, and features of relevance to biotechnology.</title>
        <authorList>
            <person name="Mattes T.E."/>
            <person name="Alexander A.K."/>
            <person name="Richardson P.M."/>
            <person name="Munk A.C."/>
            <person name="Han C.S."/>
            <person name="Stothard P."/>
            <person name="Coleman N.V."/>
        </authorList>
    </citation>
    <scope>NUCLEOTIDE SEQUENCE [LARGE SCALE GENOMIC DNA]</scope>
    <source>
        <strain>JS666 / ATCC BAA-500</strain>
    </source>
</reference>
<evidence type="ECO:0000255" key="1">
    <source>
        <dbReference type="HAMAP-Rule" id="MF_00160"/>
    </source>
</evidence>
<feature type="chain" id="PRO_1000076908" description="Phosphoserine aminotransferase">
    <location>
        <begin position="1"/>
        <end position="368"/>
    </location>
</feature>
<feature type="binding site" evidence="1">
    <location>
        <position position="42"/>
    </location>
    <ligand>
        <name>L-glutamate</name>
        <dbReference type="ChEBI" id="CHEBI:29985"/>
    </ligand>
</feature>
<feature type="binding site" evidence="1">
    <location>
        <position position="101"/>
    </location>
    <ligand>
        <name>pyridoxal 5'-phosphate</name>
        <dbReference type="ChEBI" id="CHEBI:597326"/>
    </ligand>
</feature>
<feature type="binding site" evidence="1">
    <location>
        <position position="151"/>
    </location>
    <ligand>
        <name>pyridoxal 5'-phosphate</name>
        <dbReference type="ChEBI" id="CHEBI:597326"/>
    </ligand>
</feature>
<feature type="binding site" evidence="1">
    <location>
        <position position="175"/>
    </location>
    <ligand>
        <name>pyridoxal 5'-phosphate</name>
        <dbReference type="ChEBI" id="CHEBI:597326"/>
    </ligand>
</feature>
<feature type="binding site" evidence="1">
    <location>
        <position position="198"/>
    </location>
    <ligand>
        <name>pyridoxal 5'-phosphate</name>
        <dbReference type="ChEBI" id="CHEBI:597326"/>
    </ligand>
</feature>
<feature type="binding site" evidence="1">
    <location>
        <begin position="240"/>
        <end position="241"/>
    </location>
    <ligand>
        <name>pyridoxal 5'-phosphate</name>
        <dbReference type="ChEBI" id="CHEBI:597326"/>
    </ligand>
</feature>
<feature type="modified residue" description="N6-(pyridoxal phosphate)lysine" evidence="1">
    <location>
        <position position="199"/>
    </location>
</feature>
<comment type="function">
    <text evidence="1">Catalyzes the reversible conversion of 3-phosphohydroxypyruvate to phosphoserine and of 3-hydroxy-2-oxo-4-phosphonooxybutanoate to phosphohydroxythreonine.</text>
</comment>
<comment type="catalytic activity">
    <reaction evidence="1">
        <text>O-phospho-L-serine + 2-oxoglutarate = 3-phosphooxypyruvate + L-glutamate</text>
        <dbReference type="Rhea" id="RHEA:14329"/>
        <dbReference type="ChEBI" id="CHEBI:16810"/>
        <dbReference type="ChEBI" id="CHEBI:18110"/>
        <dbReference type="ChEBI" id="CHEBI:29985"/>
        <dbReference type="ChEBI" id="CHEBI:57524"/>
        <dbReference type="EC" id="2.6.1.52"/>
    </reaction>
</comment>
<comment type="catalytic activity">
    <reaction evidence="1">
        <text>4-(phosphooxy)-L-threonine + 2-oxoglutarate = (R)-3-hydroxy-2-oxo-4-phosphooxybutanoate + L-glutamate</text>
        <dbReference type="Rhea" id="RHEA:16573"/>
        <dbReference type="ChEBI" id="CHEBI:16810"/>
        <dbReference type="ChEBI" id="CHEBI:29985"/>
        <dbReference type="ChEBI" id="CHEBI:58452"/>
        <dbReference type="ChEBI" id="CHEBI:58538"/>
        <dbReference type="EC" id="2.6.1.52"/>
    </reaction>
</comment>
<comment type="cofactor">
    <cofactor evidence="1">
        <name>pyridoxal 5'-phosphate</name>
        <dbReference type="ChEBI" id="CHEBI:597326"/>
    </cofactor>
    <text evidence="1">Binds 1 pyridoxal phosphate per subunit.</text>
</comment>
<comment type="pathway">
    <text evidence="1">Amino-acid biosynthesis; L-serine biosynthesis; L-serine from 3-phospho-D-glycerate: step 2/3.</text>
</comment>
<comment type="pathway">
    <text evidence="1">Cofactor biosynthesis; pyridoxine 5'-phosphate biosynthesis; pyridoxine 5'-phosphate from D-erythrose 4-phosphate: step 3/5.</text>
</comment>
<comment type="subunit">
    <text evidence="1">Homodimer.</text>
</comment>
<comment type="subcellular location">
    <subcellularLocation>
        <location evidence="1">Cytoplasm</location>
    </subcellularLocation>
</comment>
<comment type="similarity">
    <text evidence="1">Belongs to the class-V pyridoxal-phosphate-dependent aminotransferase family. SerC subfamily.</text>
</comment>